<reference key="1">
    <citation type="journal article" date="2009" name="Nature">
        <title>Evolution of pathogenicity and sexual reproduction in eight Candida genomes.</title>
        <authorList>
            <person name="Butler G."/>
            <person name="Rasmussen M.D."/>
            <person name="Lin M.F."/>
            <person name="Santos M.A.S."/>
            <person name="Sakthikumar S."/>
            <person name="Munro C.A."/>
            <person name="Rheinbay E."/>
            <person name="Grabherr M."/>
            <person name="Forche A."/>
            <person name="Reedy J.L."/>
            <person name="Agrafioti I."/>
            <person name="Arnaud M.B."/>
            <person name="Bates S."/>
            <person name="Brown A.J.P."/>
            <person name="Brunke S."/>
            <person name="Costanzo M.C."/>
            <person name="Fitzpatrick D.A."/>
            <person name="de Groot P.W.J."/>
            <person name="Harris D."/>
            <person name="Hoyer L.L."/>
            <person name="Hube B."/>
            <person name="Klis F.M."/>
            <person name="Kodira C."/>
            <person name="Lennard N."/>
            <person name="Logue M.E."/>
            <person name="Martin R."/>
            <person name="Neiman A.M."/>
            <person name="Nikolaou E."/>
            <person name="Quail M.A."/>
            <person name="Quinn J."/>
            <person name="Santos M.C."/>
            <person name="Schmitzberger F.F."/>
            <person name="Sherlock G."/>
            <person name="Shah P."/>
            <person name="Silverstein K.A.T."/>
            <person name="Skrzypek M.S."/>
            <person name="Soll D."/>
            <person name="Staggs R."/>
            <person name="Stansfield I."/>
            <person name="Stumpf M.P.H."/>
            <person name="Sudbery P.E."/>
            <person name="Srikantha T."/>
            <person name="Zeng Q."/>
            <person name="Berman J."/>
            <person name="Berriman M."/>
            <person name="Heitman J."/>
            <person name="Gow N.A.R."/>
            <person name="Lorenz M.C."/>
            <person name="Birren B.W."/>
            <person name="Kellis M."/>
            <person name="Cuomo C.A."/>
        </authorList>
    </citation>
    <scope>NUCLEOTIDE SEQUENCE [LARGE SCALE GENOMIC DNA]</scope>
    <source>
        <strain>ATCC 6260 / CBS 566 / DSM 6381 / JCM 1539 / NBRC 10279 / NRRL Y-324</strain>
    </source>
</reference>
<sequence length="1819" mass="203250">MSLSQQLKQINEKSASVALDRKSRSKLHSKSLIFAPKVAATQDYDYLHSVGVDGLTELCTIDSRFLKFQQTLFADSTVNFDRNVQTKEIVDNLDASIAAFLNLVSPFYPLSPAVKAVEWLVRRFYINIHNSEALILTCLPHYQSQIFARVMNVIPKSSWPPIFNWLNGYRDMSKNPPSSSILKAFRNDYQLFKLYSEYITQQVSVETVYKEQLVFYLTNTIQLLASYSTDIEKLNEVYLPVILEVIGKFLLASNTSLDHDIKIAAYTLMSVVVSLVPLADDVHISLTRSILQVPGAFDPQLKRQTMIILAQTWQRYTGAKFDFEFFNTIPLDSLLKDNLLESLVHEGFDFNNFLLALISSTNDKRTLSLAKLFKIERANEAVATTFISRLIDAASFKPDTEARASIVAAFEAMLAGSRDTLVEYLGSKKEPMSLADLEMVLLTTLSSSDVDDSEINVAQSDEVQEANGSSNSEPVTLDGVKSHTKSFLFQCEDFNDLSRLLVSFLAPFESNSYANQIAKFCAAVFTGPNASITFTLRCSLTPIIPLKVRLACLICLKRKLKELAKSGDTKLHLILPILILGLYDDHQSIRAGFAESIHSLSTPSASKNASIFLEDEMYADVAASNKVLISPKDGDSLINLLTSTDSLLKETVLDKTRLVSVLFEVVFKAQQPSKKFGLVCQTFFIAQWSQLPFAAVFKSLIFKIMSGRNITAECPSRESFIKGDVAGLFSGYEAWMASAQESKLDFESDIVSPLVNLVGGQDELSTPNSSEIDEVGWLIKATDFTKCPVIQVAATKRVTQVFEFLKPEDKVRLYSKFIELQASDDELNFDAQEILQAMPLDFNSALTLLKNFQLVAQIPEQQIPKRRRRSSNSSKQTMAHEELVSIASVHLRKLTIVLDLLEYNLRKNLKEIKPELLSSFFGILTDLEYLGHDGDMPVLYTQEVLATCMLLAVKHIKAINENGSGRISIDSNSVRADLIVNTIRSSNSPQIQNRLLLVIAELASLAPEIILHSVMPIFTFMGAHTIRQDDEFSSFALQDTIAKVVPALAKSGASSFSNEIEFLLTSFVTAFQHIPRHRRVKLFSSLSKTLGAGNSIHTILFLSGVQYASLFGKGKHGDCLSLLEFTQGYMKQFQASEQLSAIHKFCTLWQLVPTKPLDPDSDEFRNLNSRPIFGASILSLNDTELVELKAGLITFIDSLLQTDEESVGYLQLRVNQLLLDSHSTDGEKTIIIDGCKNVASLLLGSLDNFGQVSKMTKVSDNLYQFLDDILSLLPLVYFLDSIIDVLKNPMGVDRVAINFARLAGNKIENELTASNLDEQIQFSLFEKLVPVLISGIKSNQDAEISQAYMDATAQAVAKLGNCTTCFNEAKNVSVLNECLSILTSESGLKSSKPECIISSMNCISSIINIMGVKAIGFFPKIFEPTVEIWKTTKTNEEDMQLVQTSVLLLFAQLVKKLPAFVTSKLDSIFTCTIGSLAVDATVRSSILSSIVEYVDTAYVLKALCNVWGEISKSDNAEVIGLYLGAMEKTIDQLEKKSAISQATLFIKWMIKAFEFRSSVSKSSQDFDTNTIHRLESSFHSCGLRYVMKLNDKTFRPLFAGLVRWAVNGEGSTSDTDEVSRYIAFFRFFNKVQEQLKSIITSYYSYLIDPVSSLLKRIDTMEDSINLKRMVFNSLTSSFKYDQDDFWSQPSRFESICGPLLQQIPTIENSIGKYLVKCVSAFVVNVSSEEHNEKLVHGLIHYISNEHSTTNSHTKTWTIRILKSVFQKMGDQWLSYLPTLIPYIAELLEDDDEDVELEVRKGLVKVLENVLGEPLDRYLN</sequence>
<evidence type="ECO:0000250" key="1">
    <source>
        <dbReference type="UniProtKB" id="P42945"/>
    </source>
</evidence>
<evidence type="ECO:0000255" key="2"/>
<evidence type="ECO:0000305" key="3"/>
<comment type="function">
    <text evidence="1">Involved in nucleolar processing of pre-18S ribosomal RNA. Involved in ribosome biosynthesis (By similarity).</text>
</comment>
<comment type="subunit">
    <text evidence="1">Component of the ribosomal small subunit (SSU) processome.</text>
</comment>
<comment type="subcellular location">
    <subcellularLocation>
        <location evidence="1">Nucleus</location>
        <location evidence="1">Nucleolus</location>
    </subcellularLocation>
</comment>
<comment type="similarity">
    <text evidence="3">Belongs to the HEATR1/UTP10 family.</text>
</comment>
<name>UTP10_PICGU</name>
<organism>
    <name type="scientific">Meyerozyma guilliermondii (strain ATCC 6260 / CBS 566 / DSM 6381 / JCM 1539 / NBRC 10279 / NRRL Y-324)</name>
    <name type="common">Yeast</name>
    <name type="synonym">Candida guilliermondii</name>
    <dbReference type="NCBI Taxonomy" id="294746"/>
    <lineage>
        <taxon>Eukaryota</taxon>
        <taxon>Fungi</taxon>
        <taxon>Dikarya</taxon>
        <taxon>Ascomycota</taxon>
        <taxon>Saccharomycotina</taxon>
        <taxon>Pichiomycetes</taxon>
        <taxon>Debaryomycetaceae</taxon>
        <taxon>Meyerozyma</taxon>
    </lineage>
</organism>
<accession>A5DGZ7</accession>
<dbReference type="EMBL" id="CH408157">
    <property type="protein sequence ID" value="EDK38450.2"/>
    <property type="molecule type" value="Genomic_DNA"/>
</dbReference>
<dbReference type="RefSeq" id="XP_001484819.1">
    <property type="nucleotide sequence ID" value="XM_001484769.1"/>
</dbReference>
<dbReference type="SMR" id="A5DGZ7"/>
<dbReference type="FunCoup" id="A5DGZ7">
    <property type="interactions" value="1122"/>
</dbReference>
<dbReference type="STRING" id="294746.A5DGZ7"/>
<dbReference type="GeneID" id="5127142"/>
<dbReference type="KEGG" id="pgu:PGUG_02548"/>
<dbReference type="VEuPathDB" id="FungiDB:PGUG_02548"/>
<dbReference type="eggNOG" id="KOG1837">
    <property type="taxonomic scope" value="Eukaryota"/>
</dbReference>
<dbReference type="HOGENOM" id="CLU_001128_3_1_1"/>
<dbReference type="InParanoid" id="A5DGZ7"/>
<dbReference type="OMA" id="GEPFDRY"/>
<dbReference type="OrthoDB" id="31183at2759"/>
<dbReference type="Proteomes" id="UP000001997">
    <property type="component" value="Unassembled WGS sequence"/>
</dbReference>
<dbReference type="GO" id="GO:0030686">
    <property type="term" value="C:90S preribosome"/>
    <property type="evidence" value="ECO:0007669"/>
    <property type="project" value="EnsemblFungi"/>
</dbReference>
<dbReference type="GO" id="GO:0030688">
    <property type="term" value="C:preribosome, small subunit precursor"/>
    <property type="evidence" value="ECO:0007669"/>
    <property type="project" value="EnsemblFungi"/>
</dbReference>
<dbReference type="GO" id="GO:0033553">
    <property type="term" value="C:rDNA heterochromatin"/>
    <property type="evidence" value="ECO:0007669"/>
    <property type="project" value="EnsemblFungi"/>
</dbReference>
<dbReference type="GO" id="GO:0032040">
    <property type="term" value="C:small-subunit processome"/>
    <property type="evidence" value="ECO:0007669"/>
    <property type="project" value="EnsemblFungi"/>
</dbReference>
<dbReference type="GO" id="GO:0034455">
    <property type="term" value="C:t-UTP complex"/>
    <property type="evidence" value="ECO:0007669"/>
    <property type="project" value="EnsemblFungi"/>
</dbReference>
<dbReference type="GO" id="GO:0034511">
    <property type="term" value="F:U3 snoRNA binding"/>
    <property type="evidence" value="ECO:0007669"/>
    <property type="project" value="EnsemblFungi"/>
</dbReference>
<dbReference type="GO" id="GO:0000480">
    <property type="term" value="P:endonucleolytic cleavage in 5'-ETS of tricistronic rRNA transcript (SSU-rRNA, 5.8S rRNA, LSU-rRNA)"/>
    <property type="evidence" value="ECO:0007669"/>
    <property type="project" value="EnsemblFungi"/>
</dbReference>
<dbReference type="GO" id="GO:0000447">
    <property type="term" value="P:endonucleolytic cleavage in ITS1 to separate SSU-rRNA from 5.8S rRNA and LSU-rRNA from tricistronic rRNA transcript (SSU-rRNA, 5.8S rRNA, LSU-rRNA)"/>
    <property type="evidence" value="ECO:0007669"/>
    <property type="project" value="EnsemblFungi"/>
</dbReference>
<dbReference type="GO" id="GO:0000472">
    <property type="term" value="P:endonucleolytic cleavage to generate mature 5'-end of SSU-rRNA from (SSU-rRNA, 5.8S rRNA, LSU-rRNA)"/>
    <property type="evidence" value="ECO:0007669"/>
    <property type="project" value="EnsemblFungi"/>
</dbReference>
<dbReference type="GO" id="GO:0045943">
    <property type="term" value="P:positive regulation of transcription by RNA polymerase I"/>
    <property type="evidence" value="ECO:0007669"/>
    <property type="project" value="EnsemblFungi"/>
</dbReference>
<dbReference type="Gene3D" id="1.25.10.10">
    <property type="entry name" value="Leucine-rich Repeat Variant"/>
    <property type="match status" value="2"/>
</dbReference>
<dbReference type="InterPro" id="IPR011989">
    <property type="entry name" value="ARM-like"/>
</dbReference>
<dbReference type="InterPro" id="IPR016024">
    <property type="entry name" value="ARM-type_fold"/>
</dbReference>
<dbReference type="InterPro" id="IPR012954">
    <property type="entry name" value="BP28_C_dom"/>
</dbReference>
<dbReference type="InterPro" id="IPR021133">
    <property type="entry name" value="HEAT_type_2"/>
</dbReference>
<dbReference type="InterPro" id="IPR056473">
    <property type="entry name" value="HEAT_Utp10/HEAT1"/>
</dbReference>
<dbReference type="InterPro" id="IPR022125">
    <property type="entry name" value="U3snoRNP10_N"/>
</dbReference>
<dbReference type="InterPro" id="IPR040191">
    <property type="entry name" value="UTP10"/>
</dbReference>
<dbReference type="PANTHER" id="PTHR13457">
    <property type="entry name" value="BAP28"/>
    <property type="match status" value="1"/>
</dbReference>
<dbReference type="PANTHER" id="PTHR13457:SF1">
    <property type="entry name" value="HEAT REPEAT-CONTAINING PROTEIN 1"/>
    <property type="match status" value="1"/>
</dbReference>
<dbReference type="Pfam" id="PF08146">
    <property type="entry name" value="BP28CT"/>
    <property type="match status" value="1"/>
</dbReference>
<dbReference type="Pfam" id="PF23243">
    <property type="entry name" value="HEAT_HEATR1"/>
    <property type="match status" value="1"/>
</dbReference>
<dbReference type="Pfam" id="PF12397">
    <property type="entry name" value="U3snoRNP10"/>
    <property type="match status" value="1"/>
</dbReference>
<dbReference type="SMART" id="SM01036">
    <property type="entry name" value="BP28CT"/>
    <property type="match status" value="1"/>
</dbReference>
<dbReference type="SUPFAM" id="SSF48371">
    <property type="entry name" value="ARM repeat"/>
    <property type="match status" value="1"/>
</dbReference>
<dbReference type="PROSITE" id="PS50077">
    <property type="entry name" value="HEAT_REPEAT"/>
    <property type="match status" value="1"/>
</dbReference>
<feature type="chain" id="PRO_0000308511" description="U3 small nucleolar RNA-associated protein 10">
    <location>
        <begin position="1"/>
        <end position="1819"/>
    </location>
</feature>
<feature type="repeat" description="HEAT" evidence="2">
    <location>
        <begin position="1779"/>
        <end position="1817"/>
    </location>
</feature>
<keyword id="KW-0539">Nucleus</keyword>
<keyword id="KW-1185">Reference proteome</keyword>
<keyword id="KW-0687">Ribonucleoprotein</keyword>
<keyword id="KW-0690">Ribosome biogenesis</keyword>
<keyword id="KW-0698">rRNA processing</keyword>
<protein>
    <recommendedName>
        <fullName>U3 small nucleolar RNA-associated protein 10</fullName>
    </recommendedName>
</protein>
<proteinExistence type="inferred from homology"/>
<gene>
    <name evidence="1" type="primary">UTP10</name>
    <name type="ORF">PGUG_02548</name>
</gene>